<protein>
    <recommendedName>
        <fullName>Gibberellin 2-beta-dioxygenase 2</fullName>
        <ecNumber>1.14.11.13</ecNumber>
    </recommendedName>
    <alternativeName>
        <fullName>GA 2-oxidase 2</fullName>
    </alternativeName>
    <alternativeName>
        <fullName>Gibberellin 2-beta-hydroxylase 2</fullName>
    </alternativeName>
    <alternativeName>
        <fullName>Gibberellin 2-oxidase 2</fullName>
    </alternativeName>
</protein>
<gene>
    <name type="primary">GA2OX2</name>
    <name type="ordered locus">At1g30040</name>
    <name type="ORF">T1P2.6</name>
</gene>
<dbReference type="EC" id="1.14.11.13"/>
<dbReference type="EMBL" id="AJ132436">
    <property type="protein sequence ID" value="CAB41008.1"/>
    <property type="molecule type" value="mRNA"/>
</dbReference>
<dbReference type="EMBL" id="AC022455">
    <property type="protein sequence ID" value="AAG52050.1"/>
    <property type="molecule type" value="Genomic_DNA"/>
</dbReference>
<dbReference type="EMBL" id="CP002684">
    <property type="protein sequence ID" value="AEE31170.1"/>
    <property type="molecule type" value="Genomic_DNA"/>
</dbReference>
<dbReference type="EMBL" id="CP002684">
    <property type="protein sequence ID" value="AEE31171.1"/>
    <property type="molecule type" value="Genomic_DNA"/>
</dbReference>
<dbReference type="EMBL" id="BT002987">
    <property type="protein sequence ID" value="AAO22796.1"/>
    <property type="molecule type" value="mRNA"/>
</dbReference>
<dbReference type="EMBL" id="BT004464">
    <property type="protein sequence ID" value="AAO42458.1"/>
    <property type="molecule type" value="mRNA"/>
</dbReference>
<dbReference type="PIR" id="T52578">
    <property type="entry name" value="T52578"/>
</dbReference>
<dbReference type="RefSeq" id="NP_001031112.1">
    <molecule id="Q9XFR9-2"/>
    <property type="nucleotide sequence ID" value="NM_001036035.2"/>
</dbReference>
<dbReference type="RefSeq" id="NP_174296.1">
    <molecule id="Q9XFR9-1"/>
    <property type="nucleotide sequence ID" value="NM_102743.3"/>
</dbReference>
<dbReference type="SMR" id="Q9XFR9"/>
<dbReference type="FunCoup" id="Q9XFR9">
    <property type="interactions" value="21"/>
</dbReference>
<dbReference type="STRING" id="3702.Q9XFR9"/>
<dbReference type="PaxDb" id="3702-AT1G30040.1"/>
<dbReference type="ProteomicsDB" id="230049">
    <molecule id="Q9XFR9-1"/>
</dbReference>
<dbReference type="EnsemblPlants" id="AT1G30040.1">
    <molecule id="Q9XFR9-1"/>
    <property type="protein sequence ID" value="AT1G30040.1"/>
    <property type="gene ID" value="AT1G30040"/>
</dbReference>
<dbReference type="EnsemblPlants" id="AT1G30040.2">
    <molecule id="Q9XFR9-2"/>
    <property type="protein sequence ID" value="AT1G30040.2"/>
    <property type="gene ID" value="AT1G30040"/>
</dbReference>
<dbReference type="GeneID" id="839883"/>
<dbReference type="Gramene" id="AT1G30040.1">
    <molecule id="Q9XFR9-1"/>
    <property type="protein sequence ID" value="AT1G30040.1"/>
    <property type="gene ID" value="AT1G30040"/>
</dbReference>
<dbReference type="Gramene" id="AT1G30040.2">
    <molecule id="Q9XFR9-2"/>
    <property type="protein sequence ID" value="AT1G30040.2"/>
    <property type="gene ID" value="AT1G30040"/>
</dbReference>
<dbReference type="KEGG" id="ath:AT1G30040"/>
<dbReference type="Araport" id="AT1G30040"/>
<dbReference type="TAIR" id="AT1G30040">
    <property type="gene designation" value="GA2OX2"/>
</dbReference>
<dbReference type="eggNOG" id="KOG0143">
    <property type="taxonomic scope" value="Eukaryota"/>
</dbReference>
<dbReference type="HOGENOM" id="CLU_010119_16_3_1"/>
<dbReference type="InParanoid" id="Q9XFR9"/>
<dbReference type="OMA" id="KLMACEV"/>
<dbReference type="PhylomeDB" id="Q9XFR9"/>
<dbReference type="BioCyc" id="ARA:AT1G30040-MONOMER"/>
<dbReference type="BioCyc" id="MetaCyc:AT1G30040-MONOMER"/>
<dbReference type="BRENDA" id="1.14.11.13">
    <property type="organism ID" value="399"/>
</dbReference>
<dbReference type="UniPathway" id="UPA00390"/>
<dbReference type="PRO" id="PR:Q9XFR9"/>
<dbReference type="Proteomes" id="UP000006548">
    <property type="component" value="Chromosome 1"/>
</dbReference>
<dbReference type="ExpressionAtlas" id="Q9XFR9">
    <property type="expression patterns" value="baseline and differential"/>
</dbReference>
<dbReference type="GO" id="GO:0045543">
    <property type="term" value="F:gibberellin 2-beta-dioxygenase activity"/>
    <property type="evidence" value="ECO:0007669"/>
    <property type="project" value="UniProtKB-EC"/>
</dbReference>
<dbReference type="GO" id="GO:0046872">
    <property type="term" value="F:metal ion binding"/>
    <property type="evidence" value="ECO:0007669"/>
    <property type="project" value="UniProtKB-KW"/>
</dbReference>
<dbReference type="GO" id="GO:0071456">
    <property type="term" value="P:cellular response to hypoxia"/>
    <property type="evidence" value="ECO:0007007"/>
    <property type="project" value="TAIR"/>
</dbReference>
<dbReference type="GO" id="GO:0009686">
    <property type="term" value="P:gibberellin biosynthetic process"/>
    <property type="evidence" value="ECO:0007669"/>
    <property type="project" value="UniProtKB-UniPathway"/>
</dbReference>
<dbReference type="GO" id="GO:0010114">
    <property type="term" value="P:response to red light"/>
    <property type="evidence" value="ECO:0000270"/>
    <property type="project" value="TAIR"/>
</dbReference>
<dbReference type="GO" id="GO:0009639">
    <property type="term" value="P:response to red or far red light"/>
    <property type="evidence" value="ECO:0000270"/>
    <property type="project" value="TAIR"/>
</dbReference>
<dbReference type="FunFam" id="2.60.120.330:FF:000014">
    <property type="entry name" value="Gibberellin 2-beta-dioxygenase 1"/>
    <property type="match status" value="1"/>
</dbReference>
<dbReference type="Gene3D" id="2.60.120.330">
    <property type="entry name" value="B-lactam Antibiotic, Isopenicillin N Synthase, Chain"/>
    <property type="match status" value="1"/>
</dbReference>
<dbReference type="InterPro" id="IPR026992">
    <property type="entry name" value="DIOX_N"/>
</dbReference>
<dbReference type="InterPro" id="IPR044861">
    <property type="entry name" value="IPNS-like_FE2OG_OXY"/>
</dbReference>
<dbReference type="InterPro" id="IPR027443">
    <property type="entry name" value="IPNS-like_sf"/>
</dbReference>
<dbReference type="InterPro" id="IPR050231">
    <property type="entry name" value="Iron_ascorbate_oxido_reductase"/>
</dbReference>
<dbReference type="InterPro" id="IPR005123">
    <property type="entry name" value="Oxoglu/Fe-dep_dioxygenase_dom"/>
</dbReference>
<dbReference type="PANTHER" id="PTHR47990">
    <property type="entry name" value="2-OXOGLUTARATE (2OG) AND FE(II)-DEPENDENT OXYGENASE SUPERFAMILY PROTEIN-RELATED"/>
    <property type="match status" value="1"/>
</dbReference>
<dbReference type="Pfam" id="PF03171">
    <property type="entry name" value="2OG-FeII_Oxy"/>
    <property type="match status" value="1"/>
</dbReference>
<dbReference type="Pfam" id="PF14226">
    <property type="entry name" value="DIOX_N"/>
    <property type="match status" value="1"/>
</dbReference>
<dbReference type="PRINTS" id="PR00682">
    <property type="entry name" value="IPNSYNTHASE"/>
</dbReference>
<dbReference type="SUPFAM" id="SSF51197">
    <property type="entry name" value="Clavaminate synthase-like"/>
    <property type="match status" value="1"/>
</dbReference>
<dbReference type="PROSITE" id="PS51471">
    <property type="entry name" value="FE2OG_OXY"/>
    <property type="match status" value="1"/>
</dbReference>
<reference key="1">
    <citation type="journal article" date="1999" name="Proc. Natl. Acad. Sci. U.S.A.">
        <title>Molecular cloning and functional expression of gibberellin 2-oxidases, multifunctional enzymes involved in gibberellin deactivation.</title>
        <authorList>
            <person name="Thomas S.G."/>
            <person name="Phillips A.L."/>
            <person name="Hedden P."/>
        </authorList>
    </citation>
    <scope>NUCLEOTIDE SEQUENCE [MRNA]</scope>
    <scope>FUNCTION</scope>
    <scope>TISSUE SPECIFICITY</scope>
    <scope>INDUCTION</scope>
    <source>
        <strain>cv. Columbia</strain>
    </source>
</reference>
<reference key="2">
    <citation type="journal article" date="2000" name="Nature">
        <title>Sequence and analysis of chromosome 1 of the plant Arabidopsis thaliana.</title>
        <authorList>
            <person name="Theologis A."/>
            <person name="Ecker J.R."/>
            <person name="Palm C.J."/>
            <person name="Federspiel N.A."/>
            <person name="Kaul S."/>
            <person name="White O."/>
            <person name="Alonso J."/>
            <person name="Altafi H."/>
            <person name="Araujo R."/>
            <person name="Bowman C.L."/>
            <person name="Brooks S.Y."/>
            <person name="Buehler E."/>
            <person name="Chan A."/>
            <person name="Chao Q."/>
            <person name="Chen H."/>
            <person name="Cheuk R.F."/>
            <person name="Chin C.W."/>
            <person name="Chung M.K."/>
            <person name="Conn L."/>
            <person name="Conway A.B."/>
            <person name="Conway A.R."/>
            <person name="Creasy T.H."/>
            <person name="Dewar K."/>
            <person name="Dunn P."/>
            <person name="Etgu P."/>
            <person name="Feldblyum T.V."/>
            <person name="Feng J.-D."/>
            <person name="Fong B."/>
            <person name="Fujii C.Y."/>
            <person name="Gill J.E."/>
            <person name="Goldsmith A.D."/>
            <person name="Haas B."/>
            <person name="Hansen N.F."/>
            <person name="Hughes B."/>
            <person name="Huizar L."/>
            <person name="Hunter J.L."/>
            <person name="Jenkins J."/>
            <person name="Johnson-Hopson C."/>
            <person name="Khan S."/>
            <person name="Khaykin E."/>
            <person name="Kim C.J."/>
            <person name="Koo H.L."/>
            <person name="Kremenetskaia I."/>
            <person name="Kurtz D.B."/>
            <person name="Kwan A."/>
            <person name="Lam B."/>
            <person name="Langin-Hooper S."/>
            <person name="Lee A."/>
            <person name="Lee J.M."/>
            <person name="Lenz C.A."/>
            <person name="Li J.H."/>
            <person name="Li Y.-P."/>
            <person name="Lin X."/>
            <person name="Liu S.X."/>
            <person name="Liu Z.A."/>
            <person name="Luros J.S."/>
            <person name="Maiti R."/>
            <person name="Marziali A."/>
            <person name="Militscher J."/>
            <person name="Miranda M."/>
            <person name="Nguyen M."/>
            <person name="Nierman W.C."/>
            <person name="Osborne B.I."/>
            <person name="Pai G."/>
            <person name="Peterson J."/>
            <person name="Pham P.K."/>
            <person name="Rizzo M."/>
            <person name="Rooney T."/>
            <person name="Rowley D."/>
            <person name="Sakano H."/>
            <person name="Salzberg S.L."/>
            <person name="Schwartz J.R."/>
            <person name="Shinn P."/>
            <person name="Southwick A.M."/>
            <person name="Sun H."/>
            <person name="Tallon L.J."/>
            <person name="Tambunga G."/>
            <person name="Toriumi M.J."/>
            <person name="Town C.D."/>
            <person name="Utterback T."/>
            <person name="Van Aken S."/>
            <person name="Vaysberg M."/>
            <person name="Vysotskaia V.S."/>
            <person name="Walker M."/>
            <person name="Wu D."/>
            <person name="Yu G."/>
            <person name="Fraser C.M."/>
            <person name="Venter J.C."/>
            <person name="Davis R.W."/>
        </authorList>
    </citation>
    <scope>NUCLEOTIDE SEQUENCE [LARGE SCALE GENOMIC DNA]</scope>
    <source>
        <strain>cv. Columbia</strain>
    </source>
</reference>
<reference key="3">
    <citation type="journal article" date="2017" name="Plant J.">
        <title>Araport11: a complete reannotation of the Arabidopsis thaliana reference genome.</title>
        <authorList>
            <person name="Cheng C.Y."/>
            <person name="Krishnakumar V."/>
            <person name="Chan A.P."/>
            <person name="Thibaud-Nissen F."/>
            <person name="Schobel S."/>
            <person name="Town C.D."/>
        </authorList>
    </citation>
    <scope>GENOME REANNOTATION</scope>
    <source>
        <strain>cv. Columbia</strain>
    </source>
</reference>
<reference key="4">
    <citation type="journal article" date="2003" name="Science">
        <title>Empirical analysis of transcriptional activity in the Arabidopsis genome.</title>
        <authorList>
            <person name="Yamada K."/>
            <person name="Lim J."/>
            <person name="Dale J.M."/>
            <person name="Chen H."/>
            <person name="Shinn P."/>
            <person name="Palm C.J."/>
            <person name="Southwick A.M."/>
            <person name="Wu H.C."/>
            <person name="Kim C.J."/>
            <person name="Nguyen M."/>
            <person name="Pham P.K."/>
            <person name="Cheuk R.F."/>
            <person name="Karlin-Newmann G."/>
            <person name="Liu S.X."/>
            <person name="Lam B."/>
            <person name="Sakano H."/>
            <person name="Wu T."/>
            <person name="Yu G."/>
            <person name="Miranda M."/>
            <person name="Quach H.L."/>
            <person name="Tripp M."/>
            <person name="Chang C.H."/>
            <person name="Lee J.M."/>
            <person name="Toriumi M.J."/>
            <person name="Chan M.M."/>
            <person name="Tang C.C."/>
            <person name="Onodera C.S."/>
            <person name="Deng J.M."/>
            <person name="Akiyama K."/>
            <person name="Ansari Y."/>
            <person name="Arakawa T."/>
            <person name="Banh J."/>
            <person name="Banno F."/>
            <person name="Bowser L."/>
            <person name="Brooks S.Y."/>
            <person name="Carninci P."/>
            <person name="Chao Q."/>
            <person name="Choy N."/>
            <person name="Enju A."/>
            <person name="Goldsmith A.D."/>
            <person name="Gurjal M."/>
            <person name="Hansen N.F."/>
            <person name="Hayashizaki Y."/>
            <person name="Johnson-Hopson C."/>
            <person name="Hsuan V.W."/>
            <person name="Iida K."/>
            <person name="Karnes M."/>
            <person name="Khan S."/>
            <person name="Koesema E."/>
            <person name="Ishida J."/>
            <person name="Jiang P.X."/>
            <person name="Jones T."/>
            <person name="Kawai J."/>
            <person name="Kamiya A."/>
            <person name="Meyers C."/>
            <person name="Nakajima M."/>
            <person name="Narusaka M."/>
            <person name="Seki M."/>
            <person name="Sakurai T."/>
            <person name="Satou M."/>
            <person name="Tamse R."/>
            <person name="Vaysberg M."/>
            <person name="Wallender E.K."/>
            <person name="Wong C."/>
            <person name="Yamamura Y."/>
            <person name="Yuan S."/>
            <person name="Shinozaki K."/>
            <person name="Davis R.W."/>
            <person name="Theologis A."/>
            <person name="Ecker J.R."/>
        </authorList>
    </citation>
    <scope>NUCLEOTIDE SEQUENCE [LARGE SCALE MRNA]</scope>
    <source>
        <strain>cv. Columbia</strain>
    </source>
</reference>
<reference key="5">
    <citation type="journal article" date="2005" name="Curr. Biol.">
        <title>KNOX action in Arabidopsis is mediated by coordinate regulation of cytokinin and gibberellin activities.</title>
        <authorList>
            <person name="Jasinski S."/>
            <person name="Piazza P."/>
            <person name="Craft J."/>
            <person name="Hay A."/>
            <person name="Woolley L."/>
            <person name="Rieu I."/>
            <person name="Phillips A."/>
            <person name="Hedden P."/>
            <person name="Tsiantis M."/>
        </authorList>
    </citation>
    <scope>TISSUE SPECIFICITY</scope>
    <scope>INDUCTION BY CYTOKININ</scope>
</reference>
<reference key="6">
    <citation type="journal article" date="2006" name="Plant Physiol.">
        <title>Transcriptional regulation of gibberellin metabolism genes by auxin signaling in Arabidopsis.</title>
        <authorList>
            <person name="Frigerio M."/>
            <person name="Alabadi D."/>
            <person name="Perez-Gomez J."/>
            <person name="Garcia-Carcel L."/>
            <person name="Phillips A.L."/>
            <person name="Hedden P."/>
            <person name="Blazquez M.A."/>
        </authorList>
    </citation>
    <scope>INDUCTION BY AUXIN AND PACLOBUTRAZOL</scope>
    <scope>TISSUE SPECIFICITY</scope>
</reference>
<reference key="7">
    <citation type="journal article" date="2008" name="Plant Cell">
        <title>Genetic analysis reveals that C19-GA 2-oxidation is a major gibberellin inactivation pathway in Arabidopsis.</title>
        <authorList>
            <person name="Rieu I."/>
            <person name="Eriksson S."/>
            <person name="Powers S.J."/>
            <person name="Gong F."/>
            <person name="Griffiths J."/>
            <person name="Woolley L."/>
            <person name="Benlloch R."/>
            <person name="Nilsson O."/>
            <person name="Thomas S.G."/>
            <person name="Hedden P."/>
            <person name="Phillips A.L."/>
        </authorList>
    </citation>
    <scope>FUNCTION</scope>
</reference>
<reference key="8">
    <citation type="journal article" date="2011" name="Gene">
        <title>Evolutionary analysis of three gibberellin oxidase genes in rice, Arabidopsis, and soybean.</title>
        <authorList>
            <person name="Han F."/>
            <person name="Zhu B."/>
        </authorList>
    </citation>
    <scope>3D-STRUCTURE MODELING</scope>
    <scope>GENE FAMILY</scope>
</reference>
<evidence type="ECO:0000255" key="1"/>
<evidence type="ECO:0000255" key="2">
    <source>
        <dbReference type="PROSITE-ProRule" id="PRU00805"/>
    </source>
</evidence>
<evidence type="ECO:0000269" key="3">
    <source>
    </source>
</evidence>
<evidence type="ECO:0000269" key="4">
    <source>
    </source>
</evidence>
<evidence type="ECO:0000269" key="5">
    <source>
    </source>
</evidence>
<evidence type="ECO:0000269" key="6">
    <source>
    </source>
</evidence>
<evidence type="ECO:0000305" key="7"/>
<feature type="chain" id="PRO_0000067306" description="Gibberellin 2-beta-dioxygenase 2">
    <location>
        <begin position="1"/>
        <end position="341"/>
    </location>
</feature>
<feature type="domain" description="Fe2OG dioxygenase" evidence="2">
    <location>
        <begin position="179"/>
        <end position="283"/>
    </location>
</feature>
<feature type="active site" evidence="1">
    <location>
        <position position="274"/>
    </location>
</feature>
<feature type="binding site" evidence="2">
    <location>
        <position position="207"/>
    </location>
    <ligand>
        <name>Fe cation</name>
        <dbReference type="ChEBI" id="CHEBI:24875"/>
    </ligand>
</feature>
<feature type="binding site" evidence="2">
    <location>
        <position position="209"/>
    </location>
    <ligand>
        <name>Fe cation</name>
        <dbReference type="ChEBI" id="CHEBI:24875"/>
    </ligand>
</feature>
<feature type="binding site" evidence="2">
    <location>
        <position position="264"/>
    </location>
    <ligand>
        <name>Fe cation</name>
        <dbReference type="ChEBI" id="CHEBI:24875"/>
    </ligand>
</feature>
<feature type="binding site" evidence="2">
    <location>
        <position position="274"/>
    </location>
    <ligand>
        <name>2-oxoglutarate</name>
        <dbReference type="ChEBI" id="CHEBI:16810"/>
    </ligand>
</feature>
<feature type="splice variant" id="VSP_046515" description="In isoform 2." evidence="7">
    <original>MTNGRFKSVKHRVLA</original>
    <variation>PFPLFFLFFYIYLKI</variation>
    <location>
        <begin position="254"/>
        <end position="268"/>
    </location>
</feature>
<feature type="splice variant" id="VSP_046516" description="In isoform 2." evidence="7">
    <location>
        <begin position="269"/>
        <end position="341"/>
    </location>
</feature>
<name>G2OX2_ARATH</name>
<proteinExistence type="evidence at transcript level"/>
<keyword id="KW-0025">Alternative splicing</keyword>
<keyword id="KW-0223">Dioxygenase</keyword>
<keyword id="KW-0408">Iron</keyword>
<keyword id="KW-0479">Metal-binding</keyword>
<keyword id="KW-0560">Oxidoreductase</keyword>
<keyword id="KW-1185">Reference proteome</keyword>
<sequence length="341" mass="38457">MVVLPQPVTLDNHISLIPTYKPVPVLTSHSIPVVNLADPEAKTRIVKACEEFGFFKVVNHGVRPELMTRLEQEAIGFFGLPQSLKNRAGPPEPYGYGNKRIGPNGDVGWIEYLLLNANPQLSSPKTSAVFRQTPQIFRESVEEYMKEIKEVSYKVLEMVAEELGIEPRDTLSKMLRDEKSDSCLRLNHYPAAEEEAEKMVKVGFGEHTDPQIISVLRSNNTAGLQICVKDGSWVAVPPDHSSFFINVGDALQVMTNGRFKSVKHRVLADTRRSRISMIYFGGPPLSQKIAPLPCLVPEQDDWLYKEFTWSQYKSSAYKSKLGDYRLGLFEKQPLLNHKTLV</sequence>
<comment type="function">
    <text evidence="3 6">Catalyzes the 2-beta-hydroxylation of several biologically active gibberellins, leading to the homeostatic regulation of their endogenous level. Catabolism of gibberellins (GAs) plays a central role in plant development. Converts GA9/GA20 to GA51/GA29 and GA4/GA1 to GA34/GA8.</text>
</comment>
<comment type="catalytic activity">
    <reaction>
        <text>gibberellin A1 + 2-oxoglutarate + O2 = gibberellin A8 + succinate + CO2</text>
        <dbReference type="Rhea" id="RHEA:15005"/>
        <dbReference type="ChEBI" id="CHEBI:15379"/>
        <dbReference type="ChEBI" id="CHEBI:16526"/>
        <dbReference type="ChEBI" id="CHEBI:16810"/>
        <dbReference type="ChEBI" id="CHEBI:30031"/>
        <dbReference type="ChEBI" id="CHEBI:58524"/>
        <dbReference type="ChEBI" id="CHEBI:58594"/>
        <dbReference type="EC" id="1.14.11.13"/>
    </reaction>
</comment>
<comment type="cofactor">
    <cofactor evidence="2">
        <name>Fe(2+)</name>
        <dbReference type="ChEBI" id="CHEBI:29033"/>
    </cofactor>
    <text evidence="2">Binds 1 Fe(2+) ion per subunit.</text>
</comment>
<comment type="pathway">
    <text>Plant hormone biosynthesis; gibberellin biosynthesis.</text>
</comment>
<comment type="alternative products">
    <event type="alternative splicing"/>
    <isoform>
        <id>Q9XFR9-1</id>
        <name>1</name>
        <sequence type="displayed"/>
    </isoform>
    <isoform>
        <id>Q9XFR9-2</id>
        <name>2</name>
        <sequence type="described" ref="VSP_046515 VSP_046516"/>
    </isoform>
</comment>
<comment type="tissue specificity">
    <text evidence="3 4 5">Preferentially expressed in flowers, siliques, and upper stems. Expressed in cotyledons, at the base of the shoot apical meristem and developing leaf primordia.</text>
</comment>
<comment type="induction">
    <text evidence="3 4 5">Up-regulated by cytokinin, auxin, paclobutrazol and gibberellin A3 (GA3).</text>
</comment>
<comment type="similarity">
    <text evidence="7">Belongs to the iron/ascorbate-dependent oxidoreductase family. GA2OX subfamily.</text>
</comment>
<organism>
    <name type="scientific">Arabidopsis thaliana</name>
    <name type="common">Mouse-ear cress</name>
    <dbReference type="NCBI Taxonomy" id="3702"/>
    <lineage>
        <taxon>Eukaryota</taxon>
        <taxon>Viridiplantae</taxon>
        <taxon>Streptophyta</taxon>
        <taxon>Embryophyta</taxon>
        <taxon>Tracheophyta</taxon>
        <taxon>Spermatophyta</taxon>
        <taxon>Magnoliopsida</taxon>
        <taxon>eudicotyledons</taxon>
        <taxon>Gunneridae</taxon>
        <taxon>Pentapetalae</taxon>
        <taxon>rosids</taxon>
        <taxon>malvids</taxon>
        <taxon>Brassicales</taxon>
        <taxon>Brassicaceae</taxon>
        <taxon>Camelineae</taxon>
        <taxon>Arabidopsis</taxon>
    </lineage>
</organism>
<accession>Q9XFR9</accession>
<accession>F4I385</accession>